<evidence type="ECO:0000250" key="1"/>
<evidence type="ECO:0000255" key="2"/>
<evidence type="ECO:0000305" key="3"/>
<sequence>MLRPLRKSVLASCRHCFKVCGGLPQKQLPLFSPLLLRARYSSTDSSTKRSNKSDKIDAPGFKKIFLVAIIGTVIFVKTVQSLDKNKPKTTLSEEEFENVVKGLKRRVAIFPQGEVDIKFSLSPSIEETRKVLQKSQGDDINELQFVDPVKVIDYYRTLRDDRYEALLNEYYKKYGCDTYAYNLPTGMLVMLLGRYFKENFKAGDKLVVVNFPHSIADATRFENEVSIVSKIFVPRKLSGSDVCKYYETVGKADII</sequence>
<accession>A6ZML5</accession>
<gene>
    <name type="primary">AIM36</name>
    <name type="synonym">FMP39</name>
    <name type="ORF">SCY_4331</name>
</gene>
<protein>
    <recommendedName>
        <fullName>Altered inheritance of mitochondria protein 36, mitochondrial</fullName>
    </recommendedName>
    <alternativeName>
        <fullName>Found in mitochondria protein 39</fullName>
    </alternativeName>
</protein>
<proteinExistence type="inferred from homology"/>
<reference key="1">
    <citation type="journal article" date="2007" name="Proc. Natl. Acad. Sci. U.S.A.">
        <title>Genome sequencing and comparative analysis of Saccharomyces cerevisiae strain YJM789.</title>
        <authorList>
            <person name="Wei W."/>
            <person name="McCusker J.H."/>
            <person name="Hyman R.W."/>
            <person name="Jones T."/>
            <person name="Ning Y."/>
            <person name="Cao Z."/>
            <person name="Gu Z."/>
            <person name="Bruno D."/>
            <person name="Miranda M."/>
            <person name="Nguyen M."/>
            <person name="Wilhelmy J."/>
            <person name="Komp C."/>
            <person name="Tamse R."/>
            <person name="Wang X."/>
            <person name="Jia P."/>
            <person name="Luedi P."/>
            <person name="Oefner P.J."/>
            <person name="David L."/>
            <person name="Dietrich F.S."/>
            <person name="Li Y."/>
            <person name="Davis R.W."/>
            <person name="Steinmetz L.M."/>
        </authorList>
    </citation>
    <scope>NUCLEOTIDE SEQUENCE [LARGE SCALE GENOMIC DNA]</scope>
    <source>
        <strain>YJM789</strain>
    </source>
</reference>
<comment type="subcellular location">
    <subcellularLocation>
        <location evidence="1">Mitochondrion membrane</location>
        <topology evidence="1">Single-pass membrane protein</topology>
    </subcellularLocation>
</comment>
<comment type="similarity">
    <text evidence="3">Belongs to the AIM36 family.</text>
</comment>
<feature type="transit peptide" description="Mitochondrion" evidence="2">
    <location>
        <begin position="1"/>
        <end position="40"/>
    </location>
</feature>
<feature type="chain" id="PRO_0000399734" description="Altered inheritance of mitochondria protein 36, mitochondrial">
    <location>
        <begin position="41"/>
        <end position="255"/>
    </location>
</feature>
<feature type="transmembrane region" description="Helical" evidence="2">
    <location>
        <begin position="64"/>
        <end position="82"/>
    </location>
</feature>
<organism>
    <name type="scientific">Saccharomyces cerevisiae (strain YJM789)</name>
    <name type="common">Baker's yeast</name>
    <dbReference type="NCBI Taxonomy" id="307796"/>
    <lineage>
        <taxon>Eukaryota</taxon>
        <taxon>Fungi</taxon>
        <taxon>Dikarya</taxon>
        <taxon>Ascomycota</taxon>
        <taxon>Saccharomycotina</taxon>
        <taxon>Saccharomycetes</taxon>
        <taxon>Saccharomycetales</taxon>
        <taxon>Saccharomycetaceae</taxon>
        <taxon>Saccharomyces</taxon>
    </lineage>
</organism>
<name>AIM36_YEAS7</name>
<keyword id="KW-0472">Membrane</keyword>
<keyword id="KW-0496">Mitochondrion</keyword>
<keyword id="KW-0809">Transit peptide</keyword>
<keyword id="KW-0812">Transmembrane</keyword>
<keyword id="KW-1133">Transmembrane helix</keyword>
<dbReference type="EMBL" id="AAFW02000021">
    <property type="protein sequence ID" value="EDN64089.1"/>
    <property type="molecule type" value="Genomic_DNA"/>
</dbReference>
<dbReference type="SMR" id="A6ZML5"/>
<dbReference type="HOGENOM" id="CLU_090420_0_0_1"/>
<dbReference type="Proteomes" id="UP000007060">
    <property type="component" value="Unassembled WGS sequence"/>
</dbReference>
<dbReference type="GO" id="GO:0031966">
    <property type="term" value="C:mitochondrial membrane"/>
    <property type="evidence" value="ECO:0007669"/>
    <property type="project" value="UniProtKB-SubCell"/>
</dbReference>